<proteinExistence type="inferred from homology"/>
<protein>
    <recommendedName>
        <fullName evidence="1">3-deoxy-manno-octulosonate cytidylyltransferase</fullName>
        <ecNumber evidence="1">2.7.7.38</ecNumber>
    </recommendedName>
    <alternativeName>
        <fullName evidence="1">CMP-2-keto-3-deoxyoctulosonic acid synthase</fullName>
        <shortName evidence="1">CKS</shortName>
        <shortName evidence="1">CMP-KDO synthase</shortName>
    </alternativeName>
</protein>
<gene>
    <name evidence="1" type="primary">kdsB</name>
    <name type="ordered locus">HAPS_0972</name>
</gene>
<sequence length="255" mass="28782">MSFTVIIPARYSSTRLPHKPLLDIAGKPMIQHVWEKAQQSGATRVIVATDHPEIEQVVTRFGGEVCLTSDKHNSGTERLAEVIEKMAIADDEIIVNIQGDEPLIPPLIVAQVAENLDKHQVNMATLAVKLTTREELFNPNVVKTLTDKNGMALYFSRATIPFGRDYFPQCDDAFVQQQNYLRHIGIYAYRAGFVKQYVAWEPTALEQLESLEQLRALWYGEKIHLDLAKEAPQVGVDTAEDLERVRQILNILCSQ</sequence>
<keyword id="KW-0963">Cytoplasm</keyword>
<keyword id="KW-0448">Lipopolysaccharide biosynthesis</keyword>
<keyword id="KW-0548">Nucleotidyltransferase</keyword>
<keyword id="KW-1185">Reference proteome</keyword>
<keyword id="KW-0808">Transferase</keyword>
<organism>
    <name type="scientific">Glaesserella parasuis serovar 5 (strain SH0165)</name>
    <name type="common">Haemophilus parasuis</name>
    <dbReference type="NCBI Taxonomy" id="557723"/>
    <lineage>
        <taxon>Bacteria</taxon>
        <taxon>Pseudomonadati</taxon>
        <taxon>Pseudomonadota</taxon>
        <taxon>Gammaproteobacteria</taxon>
        <taxon>Pasteurellales</taxon>
        <taxon>Pasteurellaceae</taxon>
        <taxon>Glaesserella</taxon>
    </lineage>
</organism>
<evidence type="ECO:0000255" key="1">
    <source>
        <dbReference type="HAMAP-Rule" id="MF_00057"/>
    </source>
</evidence>
<dbReference type="EC" id="2.7.7.38" evidence="1"/>
<dbReference type="EMBL" id="CP001321">
    <property type="protein sequence ID" value="ACL32597.1"/>
    <property type="molecule type" value="Genomic_DNA"/>
</dbReference>
<dbReference type="RefSeq" id="WP_015939548.1">
    <property type="nucleotide sequence ID" value="NC_011852.1"/>
</dbReference>
<dbReference type="SMR" id="B8F5J5"/>
<dbReference type="STRING" id="557723.HAPS_0972"/>
<dbReference type="KEGG" id="hap:HAPS_0972"/>
<dbReference type="HOGENOM" id="CLU_065038_1_0_6"/>
<dbReference type="UniPathway" id="UPA00030"/>
<dbReference type="UniPathway" id="UPA00358">
    <property type="reaction ID" value="UER00476"/>
</dbReference>
<dbReference type="Proteomes" id="UP000006743">
    <property type="component" value="Chromosome"/>
</dbReference>
<dbReference type="GO" id="GO:0005829">
    <property type="term" value="C:cytosol"/>
    <property type="evidence" value="ECO:0007669"/>
    <property type="project" value="TreeGrafter"/>
</dbReference>
<dbReference type="GO" id="GO:0008690">
    <property type="term" value="F:3-deoxy-manno-octulosonate cytidylyltransferase activity"/>
    <property type="evidence" value="ECO:0007669"/>
    <property type="project" value="UniProtKB-UniRule"/>
</dbReference>
<dbReference type="GO" id="GO:0033468">
    <property type="term" value="P:CMP-keto-3-deoxy-D-manno-octulosonic acid biosynthetic process"/>
    <property type="evidence" value="ECO:0007669"/>
    <property type="project" value="UniProtKB-UniRule"/>
</dbReference>
<dbReference type="GO" id="GO:0009103">
    <property type="term" value="P:lipopolysaccharide biosynthetic process"/>
    <property type="evidence" value="ECO:0007669"/>
    <property type="project" value="UniProtKB-UniRule"/>
</dbReference>
<dbReference type="CDD" id="cd02517">
    <property type="entry name" value="CMP-KDO-Synthetase"/>
    <property type="match status" value="1"/>
</dbReference>
<dbReference type="FunFam" id="3.90.550.10:FF:000011">
    <property type="entry name" value="3-deoxy-manno-octulosonate cytidylyltransferase"/>
    <property type="match status" value="1"/>
</dbReference>
<dbReference type="Gene3D" id="3.90.550.10">
    <property type="entry name" value="Spore Coat Polysaccharide Biosynthesis Protein SpsA, Chain A"/>
    <property type="match status" value="1"/>
</dbReference>
<dbReference type="HAMAP" id="MF_00057">
    <property type="entry name" value="KdsB"/>
    <property type="match status" value="1"/>
</dbReference>
<dbReference type="InterPro" id="IPR003329">
    <property type="entry name" value="Cytidylyl_trans"/>
</dbReference>
<dbReference type="InterPro" id="IPR004528">
    <property type="entry name" value="KdsB"/>
</dbReference>
<dbReference type="InterPro" id="IPR029044">
    <property type="entry name" value="Nucleotide-diphossugar_trans"/>
</dbReference>
<dbReference type="NCBIfam" id="TIGR00466">
    <property type="entry name" value="kdsB"/>
    <property type="match status" value="1"/>
</dbReference>
<dbReference type="NCBIfam" id="NF003950">
    <property type="entry name" value="PRK05450.1-3"/>
    <property type="match status" value="1"/>
</dbReference>
<dbReference type="NCBIfam" id="NF003952">
    <property type="entry name" value="PRK05450.1-5"/>
    <property type="match status" value="1"/>
</dbReference>
<dbReference type="NCBIfam" id="NF009905">
    <property type="entry name" value="PRK13368.1"/>
    <property type="match status" value="1"/>
</dbReference>
<dbReference type="PANTHER" id="PTHR42866">
    <property type="entry name" value="3-DEOXY-MANNO-OCTULOSONATE CYTIDYLYLTRANSFERASE"/>
    <property type="match status" value="1"/>
</dbReference>
<dbReference type="PANTHER" id="PTHR42866:SF2">
    <property type="entry name" value="3-DEOXY-MANNO-OCTULOSONATE CYTIDYLYLTRANSFERASE, MITOCHONDRIAL"/>
    <property type="match status" value="1"/>
</dbReference>
<dbReference type="Pfam" id="PF02348">
    <property type="entry name" value="CTP_transf_3"/>
    <property type="match status" value="1"/>
</dbReference>
<dbReference type="SUPFAM" id="SSF53448">
    <property type="entry name" value="Nucleotide-diphospho-sugar transferases"/>
    <property type="match status" value="1"/>
</dbReference>
<accession>B8F5J5</accession>
<name>KDSB_GLAP5</name>
<feature type="chain" id="PRO_1000117802" description="3-deoxy-manno-octulosonate cytidylyltransferase">
    <location>
        <begin position="1"/>
        <end position="255"/>
    </location>
</feature>
<comment type="function">
    <text evidence="1">Activates KDO (a required 8-carbon sugar) for incorporation into bacterial lipopolysaccharide in Gram-negative bacteria.</text>
</comment>
<comment type="catalytic activity">
    <reaction evidence="1">
        <text>3-deoxy-alpha-D-manno-oct-2-ulosonate + CTP = CMP-3-deoxy-beta-D-manno-octulosonate + diphosphate</text>
        <dbReference type="Rhea" id="RHEA:23448"/>
        <dbReference type="ChEBI" id="CHEBI:33019"/>
        <dbReference type="ChEBI" id="CHEBI:37563"/>
        <dbReference type="ChEBI" id="CHEBI:85986"/>
        <dbReference type="ChEBI" id="CHEBI:85987"/>
        <dbReference type="EC" id="2.7.7.38"/>
    </reaction>
</comment>
<comment type="pathway">
    <text evidence="1">Nucleotide-sugar biosynthesis; CMP-3-deoxy-D-manno-octulosonate biosynthesis; CMP-3-deoxy-D-manno-octulosonate from 3-deoxy-D-manno-octulosonate and CTP: step 1/1.</text>
</comment>
<comment type="pathway">
    <text evidence="1">Bacterial outer membrane biogenesis; lipopolysaccharide biosynthesis.</text>
</comment>
<comment type="subcellular location">
    <subcellularLocation>
        <location evidence="1">Cytoplasm</location>
    </subcellularLocation>
</comment>
<comment type="similarity">
    <text evidence="1">Belongs to the KdsB family.</text>
</comment>
<reference key="1">
    <citation type="journal article" date="2009" name="J. Bacteriol.">
        <title>Complete genome sequence of Haemophilus parasuis SH0165.</title>
        <authorList>
            <person name="Yue M."/>
            <person name="Yang F."/>
            <person name="Yang J."/>
            <person name="Bei W."/>
            <person name="Cai X."/>
            <person name="Chen L."/>
            <person name="Dong J."/>
            <person name="Zhou R."/>
            <person name="Jin M."/>
            <person name="Jin Q."/>
            <person name="Chen H."/>
        </authorList>
    </citation>
    <scope>NUCLEOTIDE SEQUENCE [LARGE SCALE GENOMIC DNA]</scope>
    <source>
        <strain>SH0165</strain>
    </source>
</reference>